<sequence>MEKSLKKKIIVRGAKEHNLKNVDVDIPKDGLVVISGKSGSGKSSLAFDTIFAEGQRRYMESVSAYARQFLGVMKKPNVDYIDGLSPSIAIEQRTISNNPRSTVGTITEIYDYYRLIFAKIGKAYCPNDGRLIEEQSLDKIVNTILSYSEGSKVILFAPIVRGSKGSHKKVLEKILNQGFNRVRINSEDYLIEDALNLNLHKNKKHTIEIIVDRIKLGNNVRVRLAESIETSLAVSNGYLRVEIDNDLEKIDKLFTEHNSCPLCGFSLPLIEPRLFSFNSPFGACSECSGLGVTLEFDFESICPDTSLSFNDDAFLTFKTSSSWSVAIFKGLAKHYNFDLNTPIKDIPDKVLKQILYGSNEKIDFIYQSKEMEAKELDGGFHYSKTFEGLLPLLKRRYLATESESTKIFYENLMSKKICNSCKGKRLSVGALTVKINGKDIQDLTNLSVFDSYVFFENLQLDMVDEKISKEILKEIKSRLKFLIDVGLSYLYLNRISGSLSGGEAQRIRLATQIGSALSGVIYVLDEPSIGLHQRDNEKLISTLVNLKNLGNTVIVVEHDEQTLRTADYIIDMGPGAGILGGEIVAKGALIDILNSKNSLTGQYLSGKFKIDVPSSRRKADKGEILLLGSNKNNLKNIDLSIPLGVFTVITGVSGSGKSTLLNEVLYPALDSRLKLNEKYCDGFKDIVGYEKIDKIIQINQKPIGRTSRSNPATYVGFFTEIRELFAKLPDAKSRGFKAGRFSFNVKGGRCEKCQGDGYLNIQMHFLPDVFVPCDLCKGKKFNEETLEVRYKGKNIHDVLEMSVFEASKFFENVPKISHYLKFLIEVGLEYIKLGQSATTLSGGEAQRIKLAFELSKKSTGKTFYIIDEPTTGLHFDDIKKLLEVLQRLVSNGNTVVLIEHNLDVIKQADYIIDLGPDGGLAGGNIVVSGIPEEVAKCENSYTGMFLKNLL</sequence>
<evidence type="ECO:0000255" key="1">
    <source>
        <dbReference type="HAMAP-Rule" id="MF_00205"/>
    </source>
</evidence>
<evidence type="ECO:0000269" key="2">
    <source>
    </source>
</evidence>
<accession>O51777</accession>
<feature type="chain" id="PRO_0000093036" description="UvrABC system protein A">
    <location>
        <begin position="1"/>
        <end position="950"/>
    </location>
</feature>
<feature type="domain" description="ABC transporter 1" evidence="1">
    <location>
        <begin position="317"/>
        <end position="599"/>
    </location>
</feature>
<feature type="domain" description="ABC transporter 2" evidence="1">
    <location>
        <begin position="619"/>
        <end position="947"/>
    </location>
</feature>
<feature type="zinc finger region" description="C4-type" evidence="1">
    <location>
        <begin position="260"/>
        <end position="287"/>
    </location>
</feature>
<feature type="zinc finger region" description="C4-type" evidence="1">
    <location>
        <begin position="750"/>
        <end position="776"/>
    </location>
</feature>
<feature type="binding site" evidence="1">
    <location>
        <begin position="36"/>
        <end position="43"/>
    </location>
    <ligand>
        <name>ATP</name>
        <dbReference type="ChEBI" id="CHEBI:30616"/>
    </ligand>
</feature>
<feature type="binding site" evidence="1">
    <location>
        <begin position="651"/>
        <end position="658"/>
    </location>
    <ligand>
        <name>ATP</name>
        <dbReference type="ChEBI" id="CHEBI:30616"/>
    </ligand>
</feature>
<proteinExistence type="evidence at protein level"/>
<protein>
    <recommendedName>
        <fullName evidence="1">UvrABC system protein A</fullName>
        <shortName evidence="1">UvrA protein</shortName>
    </recommendedName>
    <alternativeName>
        <fullName evidence="1">Excinuclease ABC subunit A</fullName>
    </alternativeName>
</protein>
<reference key="1">
    <citation type="journal article" date="1997" name="Nature">
        <title>Genomic sequence of a Lyme disease spirochaete, Borrelia burgdorferi.</title>
        <authorList>
            <person name="Fraser C.M."/>
            <person name="Casjens S."/>
            <person name="Huang W.M."/>
            <person name="Sutton G.G."/>
            <person name="Clayton R.A."/>
            <person name="Lathigra R."/>
            <person name="White O."/>
            <person name="Ketchum K.A."/>
            <person name="Dodson R.J."/>
            <person name="Hickey E.K."/>
            <person name="Gwinn M.L."/>
            <person name="Dougherty B.A."/>
            <person name="Tomb J.-F."/>
            <person name="Fleischmann R.D."/>
            <person name="Richardson D.L."/>
            <person name="Peterson J.D."/>
            <person name="Kerlavage A.R."/>
            <person name="Quackenbush J."/>
            <person name="Salzberg S.L."/>
            <person name="Hanson M."/>
            <person name="van Vugt R."/>
            <person name="Palmer N."/>
            <person name="Adams M.D."/>
            <person name="Gocayne J.D."/>
            <person name="Weidman J.F."/>
            <person name="Utterback T.R."/>
            <person name="Watthey L."/>
            <person name="McDonald L.A."/>
            <person name="Artiach P."/>
            <person name="Bowman C."/>
            <person name="Garland S.A."/>
            <person name="Fujii C."/>
            <person name="Cotton M.D."/>
            <person name="Horst K."/>
            <person name="Roberts K.M."/>
            <person name="Hatch B."/>
            <person name="Smith H.O."/>
            <person name="Venter J.C."/>
        </authorList>
    </citation>
    <scope>NUCLEOTIDE SEQUENCE [LARGE SCALE GENOMIC DNA]</scope>
    <source>
        <strain>ATCC 35210 / DSM 4680 / CIP 102532 / B31</strain>
    </source>
</reference>
<reference key="2">
    <citation type="journal article" date="2008" name="Proc. Natl. Acad. Sci. U.S.A.">
        <title>MLST of housekeeping genes captures geographic population structure and suggests a European origin of Borrelia burgdorferi.</title>
        <authorList>
            <person name="Margos G."/>
            <person name="Gatewood A.G."/>
            <person name="Aanensen D.M."/>
            <person name="Hanincova K."/>
            <person name="Terekhova D."/>
            <person name="Vollmer S.A."/>
            <person name="Cornet M."/>
            <person name="Piesman J."/>
            <person name="Donaghy M."/>
            <person name="Bormane A."/>
            <person name="Hurn M.A."/>
            <person name="Feil E.J."/>
            <person name="Fish D."/>
            <person name="Casjens S."/>
            <person name="Wormser G.P."/>
            <person name="Schwartz I."/>
            <person name="Kurtenbach K."/>
        </authorList>
    </citation>
    <scope>BIOTECHNOLOGY</scope>
    <source>
        <strain>ATCC 35210 / DSM 4680 / CIP 102532 / B31</strain>
    </source>
</reference>
<gene>
    <name evidence="1" type="primary">uvrA</name>
    <name type="ordered locus">BB_0837</name>
</gene>
<comment type="function">
    <text evidence="1">The UvrABC repair system catalyzes the recognition and processing of DNA lesions. UvrA is an ATPase and a DNA-binding protein. A damage recognition complex composed of 2 UvrA and 2 UvrB subunits scans DNA for abnormalities. When the presence of a lesion has been verified by UvrB, the UvrA molecules dissociate.</text>
</comment>
<comment type="subunit">
    <text evidence="1">Forms a heterotetramer with UvrB during the search for lesions.</text>
</comment>
<comment type="subcellular location">
    <subcellularLocation>
        <location evidence="1">Cytoplasm</location>
    </subcellularLocation>
</comment>
<comment type="biotechnology">
    <text evidence="2">One of 8 loci used for multilocus sequence typing (MLST) in Borrelia burgdorferi (PubMed:18574151).</text>
</comment>
<comment type="similarity">
    <text evidence="1">Belongs to the ABC transporter superfamily. UvrA family.</text>
</comment>
<keyword id="KW-0067">ATP-binding</keyword>
<keyword id="KW-0963">Cytoplasm</keyword>
<keyword id="KW-0227">DNA damage</keyword>
<keyword id="KW-0228">DNA excision</keyword>
<keyword id="KW-0234">DNA repair</keyword>
<keyword id="KW-0238">DNA-binding</keyword>
<keyword id="KW-0267">Excision nuclease</keyword>
<keyword id="KW-0479">Metal-binding</keyword>
<keyword id="KW-0547">Nucleotide-binding</keyword>
<keyword id="KW-1185">Reference proteome</keyword>
<keyword id="KW-0677">Repeat</keyword>
<keyword id="KW-0742">SOS response</keyword>
<keyword id="KW-0862">Zinc</keyword>
<keyword id="KW-0863">Zinc-finger</keyword>
<organism>
    <name type="scientific">Borreliella burgdorferi (strain ATCC 35210 / DSM 4680 / CIP 102532 / B31)</name>
    <name type="common">Borrelia burgdorferi</name>
    <dbReference type="NCBI Taxonomy" id="224326"/>
    <lineage>
        <taxon>Bacteria</taxon>
        <taxon>Pseudomonadati</taxon>
        <taxon>Spirochaetota</taxon>
        <taxon>Spirochaetia</taxon>
        <taxon>Spirochaetales</taxon>
        <taxon>Borreliaceae</taxon>
        <taxon>Borreliella</taxon>
    </lineage>
</organism>
<name>UVRA_BORBU</name>
<dbReference type="EMBL" id="AE000783">
    <property type="protein sequence ID" value="AAC67184.1"/>
    <property type="molecule type" value="Genomic_DNA"/>
</dbReference>
<dbReference type="PIR" id="D70204">
    <property type="entry name" value="D70204"/>
</dbReference>
<dbReference type="RefSeq" id="NP_212971.1">
    <property type="nucleotide sequence ID" value="NC_001318.1"/>
</dbReference>
<dbReference type="RefSeq" id="WP_010889836.1">
    <property type="nucleotide sequence ID" value="NC_001318.1"/>
</dbReference>
<dbReference type="SMR" id="O51777"/>
<dbReference type="STRING" id="224326.BB_0837"/>
<dbReference type="PaxDb" id="224326-BB_0837"/>
<dbReference type="EnsemblBacteria" id="AAC67184">
    <property type="protein sequence ID" value="AAC67184"/>
    <property type="gene ID" value="BB_0837"/>
</dbReference>
<dbReference type="KEGG" id="bbu:BB_0837"/>
<dbReference type="PATRIC" id="fig|224326.49.peg.1229"/>
<dbReference type="HOGENOM" id="CLU_001370_0_2_12"/>
<dbReference type="OrthoDB" id="9809851at2"/>
<dbReference type="Proteomes" id="UP000001807">
    <property type="component" value="Chromosome"/>
</dbReference>
<dbReference type="GO" id="GO:0005737">
    <property type="term" value="C:cytoplasm"/>
    <property type="evidence" value="ECO:0007669"/>
    <property type="project" value="UniProtKB-SubCell"/>
</dbReference>
<dbReference type="GO" id="GO:0009380">
    <property type="term" value="C:excinuclease repair complex"/>
    <property type="evidence" value="ECO:0007669"/>
    <property type="project" value="InterPro"/>
</dbReference>
<dbReference type="GO" id="GO:0005524">
    <property type="term" value="F:ATP binding"/>
    <property type="evidence" value="ECO:0007669"/>
    <property type="project" value="UniProtKB-UniRule"/>
</dbReference>
<dbReference type="GO" id="GO:0016887">
    <property type="term" value="F:ATP hydrolysis activity"/>
    <property type="evidence" value="ECO:0007669"/>
    <property type="project" value="InterPro"/>
</dbReference>
<dbReference type="GO" id="GO:0003677">
    <property type="term" value="F:DNA binding"/>
    <property type="evidence" value="ECO:0007669"/>
    <property type="project" value="UniProtKB-UniRule"/>
</dbReference>
<dbReference type="GO" id="GO:0009381">
    <property type="term" value="F:excinuclease ABC activity"/>
    <property type="evidence" value="ECO:0007669"/>
    <property type="project" value="UniProtKB-UniRule"/>
</dbReference>
<dbReference type="GO" id="GO:0008270">
    <property type="term" value="F:zinc ion binding"/>
    <property type="evidence" value="ECO:0007669"/>
    <property type="project" value="UniProtKB-UniRule"/>
</dbReference>
<dbReference type="GO" id="GO:0006289">
    <property type="term" value="P:nucleotide-excision repair"/>
    <property type="evidence" value="ECO:0007669"/>
    <property type="project" value="UniProtKB-UniRule"/>
</dbReference>
<dbReference type="GO" id="GO:0009432">
    <property type="term" value="P:SOS response"/>
    <property type="evidence" value="ECO:0007669"/>
    <property type="project" value="UniProtKB-UniRule"/>
</dbReference>
<dbReference type="CDD" id="cd03271">
    <property type="entry name" value="ABC_UvrA_II"/>
    <property type="match status" value="1"/>
</dbReference>
<dbReference type="FunFam" id="1.20.1580.10:FF:000002">
    <property type="entry name" value="UvrABC system protein A"/>
    <property type="match status" value="1"/>
</dbReference>
<dbReference type="Gene3D" id="1.10.8.280">
    <property type="entry name" value="ABC transporter ATPase domain-like"/>
    <property type="match status" value="1"/>
</dbReference>
<dbReference type="Gene3D" id="1.20.1580.10">
    <property type="entry name" value="ABC transporter ATPase like domain"/>
    <property type="match status" value="2"/>
</dbReference>
<dbReference type="Gene3D" id="3.30.1490.20">
    <property type="entry name" value="ATP-grasp fold, A domain"/>
    <property type="match status" value="1"/>
</dbReference>
<dbReference type="Gene3D" id="3.40.50.300">
    <property type="entry name" value="P-loop containing nucleotide triphosphate hydrolases"/>
    <property type="match status" value="2"/>
</dbReference>
<dbReference type="HAMAP" id="MF_00205">
    <property type="entry name" value="UvrA"/>
    <property type="match status" value="1"/>
</dbReference>
<dbReference type="InterPro" id="IPR003439">
    <property type="entry name" value="ABC_transporter-like_ATP-bd"/>
</dbReference>
<dbReference type="InterPro" id="IPR017871">
    <property type="entry name" value="ABC_transporter-like_CS"/>
</dbReference>
<dbReference type="InterPro" id="IPR013815">
    <property type="entry name" value="ATP_grasp_subdomain_1"/>
</dbReference>
<dbReference type="InterPro" id="IPR027417">
    <property type="entry name" value="P-loop_NTPase"/>
</dbReference>
<dbReference type="InterPro" id="IPR004602">
    <property type="entry name" value="UvrA"/>
</dbReference>
<dbReference type="InterPro" id="IPR041552">
    <property type="entry name" value="UvrA_DNA-bd"/>
</dbReference>
<dbReference type="InterPro" id="IPR041102">
    <property type="entry name" value="UvrA_inter"/>
</dbReference>
<dbReference type="NCBIfam" id="NF001503">
    <property type="entry name" value="PRK00349.1"/>
    <property type="match status" value="1"/>
</dbReference>
<dbReference type="NCBIfam" id="TIGR00630">
    <property type="entry name" value="uvra"/>
    <property type="match status" value="1"/>
</dbReference>
<dbReference type="PANTHER" id="PTHR43152">
    <property type="entry name" value="UVRABC SYSTEM PROTEIN A"/>
    <property type="match status" value="1"/>
</dbReference>
<dbReference type="PANTHER" id="PTHR43152:SF3">
    <property type="entry name" value="UVRABC SYSTEM PROTEIN A"/>
    <property type="match status" value="1"/>
</dbReference>
<dbReference type="Pfam" id="PF17755">
    <property type="entry name" value="UvrA_DNA-bind"/>
    <property type="match status" value="1"/>
</dbReference>
<dbReference type="Pfam" id="PF17760">
    <property type="entry name" value="UvrA_inter"/>
    <property type="match status" value="1"/>
</dbReference>
<dbReference type="SUPFAM" id="SSF52540">
    <property type="entry name" value="P-loop containing nucleoside triphosphate hydrolases"/>
    <property type="match status" value="2"/>
</dbReference>
<dbReference type="PROSITE" id="PS00211">
    <property type="entry name" value="ABC_TRANSPORTER_1"/>
    <property type="match status" value="1"/>
</dbReference>
<dbReference type="PROSITE" id="PS50893">
    <property type="entry name" value="ABC_TRANSPORTER_2"/>
    <property type="match status" value="1"/>
</dbReference>